<accession>G5EFY7</accession>
<feature type="chain" id="PRO_0000452746" description="Zinc finger transcription factor pqm-1">
    <location>
        <begin position="1"/>
        <end position="295"/>
    </location>
</feature>
<feature type="zinc finger region" description="C2H2-type 1; degenerate" evidence="1">
    <location>
        <begin position="161"/>
        <end position="183"/>
    </location>
</feature>
<feature type="zinc finger region" description="C2H2-type 2" evidence="1">
    <location>
        <begin position="227"/>
        <end position="249"/>
    </location>
</feature>
<feature type="region of interest" description="Disordered" evidence="2">
    <location>
        <begin position="1"/>
        <end position="23"/>
    </location>
</feature>
<feature type="compositionally biased region" description="Low complexity" evidence="2">
    <location>
        <begin position="10"/>
        <end position="22"/>
    </location>
</feature>
<feature type="mutagenesis site" description="In mg477; suppresses defect in vitellogenesis on sgk-1 mutant background." evidence="4">
    <original>C</original>
    <variation>Y</variation>
    <location>
        <position position="163"/>
    </location>
</feature>
<feature type="mutagenesis site" description="Up-regulates expression of stress-response genes which may also be ceh-60 targets." evidence="6">
    <original>TST</original>
    <variation>AAA</variation>
    <location>
        <begin position="266"/>
        <end position="268"/>
    </location>
</feature>
<proteinExistence type="evidence at protein level"/>
<gene>
    <name evidence="14" type="primary">pqm-1</name>
    <name evidence="14" type="ORF">F40F8.7</name>
</gene>
<evidence type="ECO:0000255" key="1">
    <source>
        <dbReference type="PROSITE-ProRule" id="PRU00042"/>
    </source>
</evidence>
<evidence type="ECO:0000256" key="2">
    <source>
        <dbReference type="SAM" id="MobiDB-lite"/>
    </source>
</evidence>
<evidence type="ECO:0000269" key="3">
    <source>
    </source>
</evidence>
<evidence type="ECO:0000269" key="4">
    <source>
    </source>
</evidence>
<evidence type="ECO:0000269" key="5">
    <source>
    </source>
</evidence>
<evidence type="ECO:0000269" key="6">
    <source>
    </source>
</evidence>
<evidence type="ECO:0000269" key="7">
    <source>
    </source>
</evidence>
<evidence type="ECO:0000269" key="8">
    <source>
    </source>
</evidence>
<evidence type="ECO:0000269" key="9">
    <source>
    </source>
</evidence>
<evidence type="ECO:0000303" key="10">
    <source>
    </source>
</evidence>
<evidence type="ECO:0000305" key="11"/>
<evidence type="ECO:0000312" key="12">
    <source>
        <dbReference type="EMBL" id="AAB63299.1"/>
    </source>
</evidence>
<evidence type="ECO:0000312" key="13">
    <source>
        <dbReference type="Proteomes" id="UP000001940"/>
    </source>
</evidence>
<evidence type="ECO:0000312" key="14">
    <source>
        <dbReference type="WormBase" id="F40F8.7"/>
    </source>
</evidence>
<organism evidence="13">
    <name type="scientific">Caenorhabditis elegans</name>
    <dbReference type="NCBI Taxonomy" id="6239"/>
    <lineage>
        <taxon>Eukaryota</taxon>
        <taxon>Metazoa</taxon>
        <taxon>Ecdysozoa</taxon>
        <taxon>Nematoda</taxon>
        <taxon>Chromadorea</taxon>
        <taxon>Rhabditida</taxon>
        <taxon>Rhabditina</taxon>
        <taxon>Rhabditomorpha</taxon>
        <taxon>Rhabditoidea</taxon>
        <taxon>Rhabditidae</taxon>
        <taxon>Peloderinae</taxon>
        <taxon>Caenorhabditis</taxon>
    </lineage>
</organism>
<protein>
    <recommendedName>
        <fullName evidence="11">Zinc finger transcription factor pqm-1</fullName>
    </recommendedName>
    <alternativeName>
        <fullName evidence="12">CePqM132</fullName>
    </alternativeName>
    <alternativeName>
        <fullName evidence="10">Paraquat responsive protein</fullName>
    </alternativeName>
</protein>
<reference evidence="12" key="1">
    <citation type="journal article" date="1998" name="Nucleic Acids Res.">
        <title>Identification of stress-responsive genes in Caenorhabditis elegans using RT-PCR differential display.</title>
        <authorList>
            <person name="Tawe W.N."/>
            <person name="Eschbach M.-L."/>
            <person name="Walter R.D."/>
            <person name="Henkle-Duehrsen K."/>
        </authorList>
    </citation>
    <scope>NUCLEOTIDE SEQUENCE [MRNA]</scope>
    <scope>INDUCTION</scope>
    <source>
        <strain evidence="12">Bristol N2</strain>
    </source>
</reference>
<reference evidence="13" key="2">
    <citation type="journal article" date="1998" name="Science">
        <title>Genome sequence of the nematode C. elegans: a platform for investigating biology.</title>
        <authorList>
            <consortium name="The C. elegans sequencing consortium"/>
        </authorList>
    </citation>
    <scope>NUCLEOTIDE SEQUENCE [LARGE SCALE GENOMIC DNA]</scope>
    <source>
        <strain evidence="13">Bristol N2</strain>
    </source>
</reference>
<reference evidence="11" key="3">
    <citation type="journal article" date="2013" name="Cell">
        <title>PQM-1 complements DAF-16 as a key transcriptional regulator of DAF-2-mediated development and longevity.</title>
        <authorList>
            <person name="Tepper R.G."/>
            <person name="Ashraf J."/>
            <person name="Kaletsky R."/>
            <person name="Kleemann G."/>
            <person name="Murphy C.T."/>
            <person name="Bussemaker H.J."/>
        </authorList>
    </citation>
    <scope>FUNCTION</scope>
    <scope>SUBCELLULAR LOCATION</scope>
    <scope>DEVELOPMENTAL STAGE</scope>
    <scope>DISRUPTION PHENOTYPE</scope>
</reference>
<reference evidence="11" key="4">
    <citation type="journal article" date="2016" name="Genes Dev.">
        <title>A microRNA program in the C. elegans hypodermis couples to intestinal mTORC2/PQM-1 signaling to modulate fat transport.</title>
        <authorList>
            <person name="Dowen R.H."/>
            <person name="Breen P.C."/>
            <person name="Tullius T."/>
            <person name="Conery A.L."/>
            <person name="Ruvkun G."/>
        </authorList>
    </citation>
    <scope>FUNCTION</scope>
    <scope>SUBCELLULAR LOCATION</scope>
    <scope>DISRUPTION PHENOTYPE</scope>
    <scope>MUTAGENESIS OF CYS-163</scope>
</reference>
<reference evidence="11" key="5">
    <citation type="journal article" date="2018" name="Cell Rep.">
        <title>A PQM-1-Mediated Response Triggers Transcellular Chaperone Signaling and Regulates Organismal Proteostasis.</title>
        <authorList>
            <person name="O'Brien D."/>
            <person name="Jones L.M."/>
            <person name="Good S."/>
            <person name="Miles J."/>
            <person name="Vijayabaskar M.S."/>
            <person name="Aston R."/>
            <person name="Smith C.E."/>
            <person name="Westhead D.R."/>
            <person name="van Oosten-Hawle P."/>
        </authorList>
    </citation>
    <scope>FUNCTION</scope>
    <scope>SUBCELLULAR LOCATION</scope>
    <scope>DEVELOPMENTAL STAGE</scope>
</reference>
<reference evidence="11" key="6">
    <citation type="journal article" date="2019" name="Dev. Cell">
        <title>CEH-60/PBX and UNC-62/MEIS Coordinate a Metabolic Switch that Supports Reproduction in C. elegans.</title>
        <authorList>
            <person name="Dowen R.H."/>
        </authorList>
    </citation>
    <scope>FUNCTION</scope>
    <scope>INTERACTION WITH CEH-60</scope>
    <scope>SUBCELLULAR LOCATION</scope>
    <scope>MUTAGENESIS OF 266-THR--THR-268</scope>
</reference>
<reference evidence="11" key="7">
    <citation type="journal article" date="2019" name="Elife">
        <title>NHR-14 loss of function couples intestinal iron uptake with innate immunity in C. elegans through PQM-1 signaling.</title>
        <authorList>
            <person name="Rajan M."/>
            <person name="Anderson C.P."/>
            <person name="Rindler P.M."/>
            <person name="Romney S.J."/>
            <person name="Ferreira Dos Santos M.C."/>
            <person name="Gertz J."/>
            <person name="Leibold E.A."/>
        </authorList>
    </citation>
    <scope>FUNCTION</scope>
    <scope>SUBCELLULAR LOCATION</scope>
    <scope>DISRUPTION PHENOTYPE</scope>
</reference>
<reference evidence="11" key="8">
    <citation type="journal article" date="2020" name="Nat. Commun.">
        <title>PQM-1 controls hypoxic survival via regulation of lipid metabolism.</title>
        <authorList>
            <person name="Heimbucher T."/>
            <person name="Hog J."/>
            <person name="Gupta P."/>
            <person name="Murphy C.T."/>
        </authorList>
    </citation>
    <scope>FUNCTION</scope>
    <scope>SUBCELLULAR LOCATION</scope>
</reference>
<reference evidence="11" key="9">
    <citation type="journal article" date="2020" name="Nat. Commun.">
        <title>Author Correction: PQM-1 controls hypoxic survival via regulation of lipid metabolism.</title>
        <authorList>
            <person name="Heimbucher T."/>
            <person name="Hog J."/>
            <person name="Gupta P."/>
            <person name="Murphy C.T."/>
        </authorList>
    </citation>
    <scope>ERRATUM OF PUBMED:33009389</scope>
</reference>
<dbReference type="EMBL" id="AF008590">
    <property type="protein sequence ID" value="AAB63299.1"/>
    <property type="molecule type" value="mRNA"/>
</dbReference>
<dbReference type="EMBL" id="BX284602">
    <property type="protein sequence ID" value="CAA93267.1"/>
    <property type="molecule type" value="Genomic_DNA"/>
</dbReference>
<dbReference type="PIR" id="T22039">
    <property type="entry name" value="T22039"/>
</dbReference>
<dbReference type="RefSeq" id="NP_496391.1">
    <property type="nucleotide sequence ID" value="NM_063990.6"/>
</dbReference>
<dbReference type="FunCoup" id="G5EFY7">
    <property type="interactions" value="1670"/>
</dbReference>
<dbReference type="IntAct" id="G5EFY7">
    <property type="interactions" value="2"/>
</dbReference>
<dbReference type="STRING" id="6239.F40F8.7.1"/>
<dbReference type="PaxDb" id="6239-F40F8.7.2"/>
<dbReference type="EnsemblMetazoa" id="F40F8.7.1">
    <property type="protein sequence ID" value="F40F8.7.1"/>
    <property type="gene ID" value="WBGene00004096"/>
</dbReference>
<dbReference type="GeneID" id="174705"/>
<dbReference type="KEGG" id="cel:CELE_F40F8.7"/>
<dbReference type="AGR" id="WB:WBGene00004096"/>
<dbReference type="CTD" id="174705"/>
<dbReference type="WormBase" id="F40F8.7">
    <property type="protein sequence ID" value="CE05846"/>
    <property type="gene ID" value="WBGene00004096"/>
    <property type="gene designation" value="pqm-1"/>
</dbReference>
<dbReference type="eggNOG" id="KOG1721">
    <property type="taxonomic scope" value="Eukaryota"/>
</dbReference>
<dbReference type="GeneTree" id="ENSGT00970000196485"/>
<dbReference type="HOGENOM" id="CLU_937626_0_0_1"/>
<dbReference type="InParanoid" id="G5EFY7"/>
<dbReference type="OMA" id="RTSTICD"/>
<dbReference type="OrthoDB" id="45365at2759"/>
<dbReference type="PRO" id="PR:G5EFY7"/>
<dbReference type="Proteomes" id="UP000001940">
    <property type="component" value="Chromosome II"/>
</dbReference>
<dbReference type="Bgee" id="WBGene00004096">
    <property type="expression patterns" value="Expressed in larva and 3 other cell types or tissues"/>
</dbReference>
<dbReference type="GO" id="GO:0005694">
    <property type="term" value="C:chromosome"/>
    <property type="evidence" value="ECO:0000318"/>
    <property type="project" value="GO_Central"/>
</dbReference>
<dbReference type="GO" id="GO:0005737">
    <property type="term" value="C:cytoplasm"/>
    <property type="evidence" value="ECO:0000314"/>
    <property type="project" value="UniProtKB"/>
</dbReference>
<dbReference type="GO" id="GO:0005634">
    <property type="term" value="C:nucleus"/>
    <property type="evidence" value="ECO:0000314"/>
    <property type="project" value="UniProtKB"/>
</dbReference>
<dbReference type="GO" id="GO:0043035">
    <property type="term" value="F:chromatin insulator sequence binding"/>
    <property type="evidence" value="ECO:0000318"/>
    <property type="project" value="GO_Central"/>
</dbReference>
<dbReference type="GO" id="GO:0008270">
    <property type="term" value="F:zinc ion binding"/>
    <property type="evidence" value="ECO:0007669"/>
    <property type="project" value="UniProtKB-KW"/>
</dbReference>
<dbReference type="GO" id="GO:0034605">
    <property type="term" value="P:cellular response to heat"/>
    <property type="evidence" value="ECO:0000315"/>
    <property type="project" value="UniProtKB"/>
</dbReference>
<dbReference type="GO" id="GO:0050829">
    <property type="term" value="P:defense response to Gram-negative bacterium"/>
    <property type="evidence" value="ECO:0000315"/>
    <property type="project" value="UniProtKB"/>
</dbReference>
<dbReference type="GO" id="GO:0008340">
    <property type="term" value="P:determination of adult lifespan"/>
    <property type="evidence" value="ECO:0000316"/>
    <property type="project" value="WormBase"/>
</dbReference>
<dbReference type="GO" id="GO:0005977">
    <property type="term" value="P:glycogen metabolic process"/>
    <property type="evidence" value="ECO:0000315"/>
    <property type="project" value="UniProtKB"/>
</dbReference>
<dbReference type="GO" id="GO:0045087">
    <property type="term" value="P:innate immune response"/>
    <property type="evidence" value="ECO:0000315"/>
    <property type="project" value="WormBase"/>
</dbReference>
<dbReference type="GO" id="GO:0032364">
    <property type="term" value="P:intracellular oxygen homeostasis"/>
    <property type="evidence" value="ECO:0000315"/>
    <property type="project" value="UniProtKB"/>
</dbReference>
<dbReference type="GO" id="GO:0006629">
    <property type="term" value="P:lipid metabolic process"/>
    <property type="evidence" value="ECO:0000315"/>
    <property type="project" value="UniProtKB"/>
</dbReference>
<dbReference type="GO" id="GO:1903187">
    <property type="term" value="P:negative regulation of vitellogenesis"/>
    <property type="evidence" value="ECO:0000315"/>
    <property type="project" value="UniProtKB"/>
</dbReference>
<dbReference type="GO" id="GO:1905911">
    <property type="term" value="P:positive regulation of dauer entry"/>
    <property type="evidence" value="ECO:0000315"/>
    <property type="project" value="UniProtKB"/>
</dbReference>
<dbReference type="GO" id="GO:0045893">
    <property type="term" value="P:positive regulation of DNA-templated transcription"/>
    <property type="evidence" value="ECO:0000315"/>
    <property type="project" value="UniProtKB"/>
</dbReference>
<dbReference type="GO" id="GO:0010628">
    <property type="term" value="P:positive regulation of gene expression"/>
    <property type="evidence" value="ECO:0000315"/>
    <property type="project" value="UniProtKB"/>
</dbReference>
<dbReference type="GO" id="GO:1903188">
    <property type="term" value="P:positive regulation of vitellogenesis"/>
    <property type="evidence" value="ECO:0000315"/>
    <property type="project" value="UniProtKB"/>
</dbReference>
<dbReference type="GO" id="GO:0050821">
    <property type="term" value="P:protein stabilization"/>
    <property type="evidence" value="ECO:0000315"/>
    <property type="project" value="UniProtKB"/>
</dbReference>
<dbReference type="GO" id="GO:0010468">
    <property type="term" value="P:regulation of gene expression"/>
    <property type="evidence" value="ECO:0000315"/>
    <property type="project" value="UniProtKB"/>
</dbReference>
<dbReference type="GO" id="GO:0006357">
    <property type="term" value="P:regulation of transcription by RNA polymerase II"/>
    <property type="evidence" value="ECO:0000318"/>
    <property type="project" value="GO_Central"/>
</dbReference>
<dbReference type="GO" id="GO:0001666">
    <property type="term" value="P:response to hypoxia"/>
    <property type="evidence" value="ECO:0000315"/>
    <property type="project" value="UniProtKB"/>
</dbReference>
<dbReference type="Gene3D" id="3.30.160.60">
    <property type="entry name" value="Classic Zinc Finger"/>
    <property type="match status" value="1"/>
</dbReference>
<dbReference type="InterPro" id="IPR036236">
    <property type="entry name" value="Znf_C2H2_sf"/>
</dbReference>
<dbReference type="InterPro" id="IPR013087">
    <property type="entry name" value="Znf_C2H2_type"/>
</dbReference>
<dbReference type="SMART" id="SM00355">
    <property type="entry name" value="ZnF_C2H2"/>
    <property type="match status" value="3"/>
</dbReference>
<dbReference type="SUPFAM" id="SSF57667">
    <property type="entry name" value="beta-beta-alpha zinc fingers"/>
    <property type="match status" value="1"/>
</dbReference>
<dbReference type="PROSITE" id="PS00028">
    <property type="entry name" value="ZINC_FINGER_C2H2_1"/>
    <property type="match status" value="1"/>
</dbReference>
<name>PQM1_CAEEL</name>
<keyword id="KW-0010">Activator</keyword>
<keyword id="KW-0158">Chromosome</keyword>
<keyword id="KW-0963">Cytoplasm</keyword>
<keyword id="KW-0238">DNA-binding</keyword>
<keyword id="KW-0479">Metal-binding</keyword>
<keyword id="KW-0539">Nucleus</keyword>
<keyword id="KW-1185">Reference proteome</keyword>
<keyword id="KW-0677">Repeat</keyword>
<keyword id="KW-0678">Repressor</keyword>
<keyword id="KW-0804">Transcription</keyword>
<keyword id="KW-0805">Transcription regulation</keyword>
<keyword id="KW-0862">Zinc</keyword>
<keyword id="KW-0863">Zinc-finger</keyword>
<comment type="function">
    <text evidence="3 4 5 6 7 8">Zinc finger transcription factor which acts as both a transcriptional activator and repressor (PubMed:23911329, PubMed:30956009). Binds to the promoters of genes that contain the 5'-CTTATCA-3' DNA consensus sequence in their regulatory region (PubMed:23911329, PubMed:31532389). Functions downstream of the Insulin/IGF-1-like signaling (IIS) mediated pathway (PubMed:23911329, PubMed:27401555). Involved in normal development, lifespan, stress response, lipid metabolism, innate immunity and exit from the developmentally arrested larval state known as dauer (PubMed:23911329, PubMed:27401555, PubMed:29949773, PubMed:31532389, PubMed:33009389). Required for stress-induced expression of hsp-90 and resistance to heat stress, perhaps as part of a systemic stress signaling pathway (PubMed:29949773). Involved in maintenance of proteostasis (PubMed:29949773). Under hypoxic stress increases lipid levels by positively regulating fatty acid synthesis via fat-7 expression (PubMed:33009389). Associates with homeobox protein ceh-60 at the promoters of some stress-responsive genes to regulate expression; may require phosphorylation for transcriptional repression activity (PubMed:30956009). Acts downstream of nhr-14 to activate transcription of intestinal metal transporter smf-3, modulating innate immunity and iron uptake (PubMed:31532389). May act downstream of the mTORC2 signaling mediated pathway (PubMed:27401555). May act in a mutually exclusive manner with the FOXO transcription factor daf-16 (PubMed:23911329, PubMed:27401555).</text>
</comment>
<comment type="subunit">
    <text evidence="6">Interacts with ceh-60.</text>
</comment>
<comment type="subcellular location">
    <subcellularLocation>
        <location evidence="6">Chromosome</location>
    </subcellularLocation>
    <subcellularLocation>
        <location evidence="3 5 7">Nucleus</location>
    </subcellularLocation>
    <subcellularLocation>
        <location evidence="3 7">Cytoplasm</location>
    </subcellularLocation>
    <text evidence="3 7 8">Nuclear localization under normal conditions, cytoplasmic as a result of heat-stress (PubMed:23911329). Nuclear localization declines over normal lifespan (PubMed:23911329). Exposure to Gram-negative bacterium P.aeruginosa enhances nuclear localization (PubMed:31532389). Hypoxic stress enhances nuclear localization (PubMed:33009389).</text>
</comment>
<comment type="developmental stage">
    <text evidence="3 5">Expressed in intestinal cells from larval through to adult stages (PubMed:23911329). Expressed in neurons during L1 larval stage (PubMed:29949773).</text>
</comment>
<comment type="induction">
    <text evidence="9">Induced by paraquat, a chemical causing production of reactive oxygen species (ROS).</text>
</comment>
<comment type="disruption phenotype">
    <text evidence="3 4 7">RNAi-mediated knockdown on a daf-2 mutant background shortens lifespan substantially, by up to 45%, but does not alter lifespan on a daf-16 mutant or wild-type background (PubMed:23911329). Knockdown activates vitellogenesis on either lin-29, rict-1 or sgk-1 mutant backgrounds, but not on daf-2 mutants (PubMed:27401555). Reduced expression of metal transporter smf-3 on an nhr-14 mutant background (PubMed:27401555). Enhanced sensitivity to P.aeruginosa infection on an nhr-14 mutant background (PubMed:31532389).</text>
</comment>
<comment type="similarity">
    <text evidence="11">Belongs to the krueppel C2H2-type zinc-finger protein family.</text>
</comment>
<sequence>MSFLNNDFGSPPATSSPPTTMPKLPTIQDMLNNIGASTVNLMQPNPYLMQNQIPLPVPNLPLNPFLHLNPAISQEIIQQFIAMSFNTPNVLASIANMGDDEGPSCNPKMRRGDLLKSVSMDSTEDPPSITLDNNGDMIVPNNDKEGWCRNKKYIEQTENGYMCTVCRKVYGRYNSVSYHVTIYHRNPPIKCNVPNCQFTTREARYIHFHKNYRHGIPLPESIDQGSRKCPHCRHVSKSPAMLEKHIRRHQIKDGLSNINEAIRERTSTICDEAMEIEPAETEVDPIETKPRSCTL</sequence>